<accession>O58097</accession>
<dbReference type="EC" id="6.3.1.2" evidence="5"/>
<dbReference type="EMBL" id="BA000001">
    <property type="protein sequence ID" value="BAA29433.1"/>
    <property type="molecule type" value="Genomic_DNA"/>
</dbReference>
<dbReference type="PIR" id="D71143">
    <property type="entry name" value="D71143"/>
</dbReference>
<dbReference type="RefSeq" id="WP_010884448.1">
    <property type="nucleotide sequence ID" value="NC_000961.1"/>
</dbReference>
<dbReference type="SMR" id="O58097"/>
<dbReference type="STRING" id="70601.gene:9377278"/>
<dbReference type="EnsemblBacteria" id="BAA29433">
    <property type="protein sequence ID" value="BAA29433"/>
    <property type="gene ID" value="BAA29433"/>
</dbReference>
<dbReference type="GeneID" id="1444235"/>
<dbReference type="KEGG" id="pho:PH0359"/>
<dbReference type="eggNOG" id="arCOG01909">
    <property type="taxonomic scope" value="Archaea"/>
</dbReference>
<dbReference type="OrthoDB" id="36124at2157"/>
<dbReference type="Proteomes" id="UP000000752">
    <property type="component" value="Chromosome"/>
</dbReference>
<dbReference type="GO" id="GO:0005737">
    <property type="term" value="C:cytoplasm"/>
    <property type="evidence" value="ECO:0007669"/>
    <property type="project" value="UniProtKB-SubCell"/>
</dbReference>
<dbReference type="GO" id="GO:0005524">
    <property type="term" value="F:ATP binding"/>
    <property type="evidence" value="ECO:0007669"/>
    <property type="project" value="UniProtKB-KW"/>
</dbReference>
<dbReference type="GO" id="GO:0004356">
    <property type="term" value="F:glutamine synthetase activity"/>
    <property type="evidence" value="ECO:0007669"/>
    <property type="project" value="UniProtKB-EC"/>
</dbReference>
<dbReference type="GO" id="GO:0046872">
    <property type="term" value="F:metal ion binding"/>
    <property type="evidence" value="ECO:0007669"/>
    <property type="project" value="UniProtKB-KW"/>
</dbReference>
<dbReference type="GO" id="GO:0006542">
    <property type="term" value="P:glutamine biosynthetic process"/>
    <property type="evidence" value="ECO:0007669"/>
    <property type="project" value="InterPro"/>
</dbReference>
<dbReference type="Gene3D" id="3.10.20.70">
    <property type="entry name" value="Glutamine synthetase, N-terminal domain"/>
    <property type="match status" value="1"/>
</dbReference>
<dbReference type="Gene3D" id="3.30.590.10">
    <property type="entry name" value="Glutamine synthetase/guanido kinase, catalytic domain"/>
    <property type="match status" value="1"/>
</dbReference>
<dbReference type="InterPro" id="IPR008147">
    <property type="entry name" value="Gln_synt_N"/>
</dbReference>
<dbReference type="InterPro" id="IPR036651">
    <property type="entry name" value="Gln_synt_N_sf"/>
</dbReference>
<dbReference type="InterPro" id="IPR014746">
    <property type="entry name" value="Gln_synth/guanido_kin_cat_dom"/>
</dbReference>
<dbReference type="InterPro" id="IPR008146">
    <property type="entry name" value="Gln_synth_cat_dom"/>
</dbReference>
<dbReference type="InterPro" id="IPR027303">
    <property type="entry name" value="Gln_synth_gly_rich_site"/>
</dbReference>
<dbReference type="InterPro" id="IPR004809">
    <property type="entry name" value="Gln_synth_I"/>
</dbReference>
<dbReference type="InterPro" id="IPR027302">
    <property type="entry name" value="Gln_synth_N_conserv_site"/>
</dbReference>
<dbReference type="NCBIfam" id="TIGR00653">
    <property type="entry name" value="GlnA"/>
    <property type="match status" value="1"/>
</dbReference>
<dbReference type="PANTHER" id="PTHR43785">
    <property type="entry name" value="GAMMA-GLUTAMYLPUTRESCINE SYNTHETASE"/>
    <property type="match status" value="1"/>
</dbReference>
<dbReference type="PANTHER" id="PTHR43785:SF12">
    <property type="entry name" value="TYPE-1 GLUTAMINE SYNTHETASE 2"/>
    <property type="match status" value="1"/>
</dbReference>
<dbReference type="Pfam" id="PF00120">
    <property type="entry name" value="Gln-synt_C"/>
    <property type="match status" value="1"/>
</dbReference>
<dbReference type="Pfam" id="PF03951">
    <property type="entry name" value="Gln-synt_N"/>
    <property type="match status" value="1"/>
</dbReference>
<dbReference type="SMART" id="SM01230">
    <property type="entry name" value="Gln-synt_C"/>
    <property type="match status" value="1"/>
</dbReference>
<dbReference type="SUPFAM" id="SSF54368">
    <property type="entry name" value="Glutamine synthetase, N-terminal domain"/>
    <property type="match status" value="1"/>
</dbReference>
<dbReference type="SUPFAM" id="SSF55931">
    <property type="entry name" value="Glutamine synthetase/guanido kinase"/>
    <property type="match status" value="1"/>
</dbReference>
<dbReference type="PROSITE" id="PS00180">
    <property type="entry name" value="GLNA_1"/>
    <property type="match status" value="1"/>
</dbReference>
<dbReference type="PROSITE" id="PS00181">
    <property type="entry name" value="GLNA_ATP"/>
    <property type="match status" value="1"/>
</dbReference>
<dbReference type="PROSITE" id="PS51986">
    <property type="entry name" value="GS_BETA_GRASP"/>
    <property type="match status" value="1"/>
</dbReference>
<dbReference type="PROSITE" id="PS51987">
    <property type="entry name" value="GS_CATALYTIC"/>
    <property type="match status" value="1"/>
</dbReference>
<comment type="function">
    <text evidence="5">Probably involved in nitrogen metabolism via ammonium assimilation. Catalyzes the ATP-dependent biosynthesis of glutamine from glutamate and ammonia.</text>
</comment>
<comment type="catalytic activity">
    <reaction evidence="5">
        <text>L-glutamate + NH4(+) + ATP = L-glutamine + ADP + phosphate + H(+)</text>
        <dbReference type="Rhea" id="RHEA:16169"/>
        <dbReference type="ChEBI" id="CHEBI:15378"/>
        <dbReference type="ChEBI" id="CHEBI:28938"/>
        <dbReference type="ChEBI" id="CHEBI:29985"/>
        <dbReference type="ChEBI" id="CHEBI:30616"/>
        <dbReference type="ChEBI" id="CHEBI:43474"/>
        <dbReference type="ChEBI" id="CHEBI:58359"/>
        <dbReference type="ChEBI" id="CHEBI:456216"/>
        <dbReference type="EC" id="6.3.1.2"/>
    </reaction>
</comment>
<comment type="cofactor">
    <cofactor evidence="5">
        <name>Mg(2+)</name>
        <dbReference type="ChEBI" id="CHEBI:18420"/>
    </cofactor>
    <text evidence="4">Binds 2 Mg(2+) ions per subunit.</text>
</comment>
<comment type="subunit">
    <text evidence="5">Oligomer of 12 subunits arranged in the form of two hexagons.</text>
</comment>
<comment type="subcellular location">
    <subcellularLocation>
        <location evidence="5">Cytoplasm</location>
    </subcellularLocation>
</comment>
<comment type="similarity">
    <text evidence="5">Belongs to the glutamine synthetase family.</text>
</comment>
<organism>
    <name type="scientific">Pyrococcus horikoshii (strain ATCC 700860 / DSM 12428 / JCM 9974 / NBRC 100139 / OT-3)</name>
    <dbReference type="NCBI Taxonomy" id="70601"/>
    <lineage>
        <taxon>Archaea</taxon>
        <taxon>Methanobacteriati</taxon>
        <taxon>Methanobacteriota</taxon>
        <taxon>Thermococci</taxon>
        <taxon>Thermococcales</taxon>
        <taxon>Thermococcaceae</taxon>
        <taxon>Pyrococcus</taxon>
    </lineage>
</organism>
<evidence type="ECO:0000250" key="1">
    <source>
        <dbReference type="UniProtKB" id="P0A1P6"/>
    </source>
</evidence>
<evidence type="ECO:0000250" key="2">
    <source>
        <dbReference type="UniProtKB" id="P12425"/>
    </source>
</evidence>
<evidence type="ECO:0000250" key="3">
    <source>
        <dbReference type="UniProtKB" id="P77961"/>
    </source>
</evidence>
<evidence type="ECO:0000250" key="4">
    <source>
        <dbReference type="UniProtKB" id="P9WN39"/>
    </source>
</evidence>
<evidence type="ECO:0000250" key="5">
    <source>
        <dbReference type="UniProtKB" id="Q9HH09"/>
    </source>
</evidence>
<evidence type="ECO:0000255" key="6">
    <source>
        <dbReference type="PROSITE-ProRule" id="PRU01330"/>
    </source>
</evidence>
<evidence type="ECO:0000255" key="7">
    <source>
        <dbReference type="PROSITE-ProRule" id="PRU01331"/>
    </source>
</evidence>
<keyword id="KW-0067">ATP-binding</keyword>
<keyword id="KW-0963">Cytoplasm</keyword>
<keyword id="KW-0436">Ligase</keyword>
<keyword id="KW-0460">Magnesium</keyword>
<keyword id="KW-0479">Metal-binding</keyword>
<keyword id="KW-0547">Nucleotide-binding</keyword>
<sequence length="443" mass="50587">MVRKVNIIKGNEGQGKRIKFVQLIFVDINGMPKGMEVPITRLEEAIEEGIAFDGSSVPGFQGIEDSDLVFKADPSTYVEVPWDNVARVYGYIYKDGKPYEADPRGVLRRTLERLEKLGIKVYIGPEPEFYLFKKNGSWELEIPDVGGYFDILTLDKAKDIKREIAEYMPYFGLTPEVLHHEVGKAQHEIDFRHDEALKTADNIVSFKYIVKAVAEMHGLYATFMPKPIYGMPGNGMHLHISLWKDGENIFKGEEGLSETALYFIGGLLKHAKALAAVTNPTVNSYKRLVPGYEAPVYISWGYKNRSALIRVPAFWGNGARIEYRCPDPSANSYLAFAAILMAGLDGIKHKIEPFAYVEENVYEMDEKRREEIGIDMLPENLGEALDELERDKVVKEALGGAYRNFVGYKRKEWEEYLDYLEAKNLPKDTKNVTEWELERYFFI</sequence>
<proteinExistence type="inferred from homology"/>
<reference key="1">
    <citation type="journal article" date="1998" name="DNA Res.">
        <title>Complete sequence and gene organization of the genome of a hyper-thermophilic archaebacterium, Pyrococcus horikoshii OT3.</title>
        <authorList>
            <person name="Kawarabayasi Y."/>
            <person name="Sawada M."/>
            <person name="Horikawa H."/>
            <person name="Haikawa Y."/>
            <person name="Hino Y."/>
            <person name="Yamamoto S."/>
            <person name="Sekine M."/>
            <person name="Baba S."/>
            <person name="Kosugi H."/>
            <person name="Hosoyama A."/>
            <person name="Nagai Y."/>
            <person name="Sakai M."/>
            <person name="Ogura K."/>
            <person name="Otsuka R."/>
            <person name="Nakazawa H."/>
            <person name="Takamiya M."/>
            <person name="Ohfuku Y."/>
            <person name="Funahashi T."/>
            <person name="Tanaka T."/>
            <person name="Kudoh Y."/>
            <person name="Yamazaki J."/>
            <person name="Kushida N."/>
            <person name="Oguchi A."/>
            <person name="Aoki K."/>
            <person name="Yoshizawa T."/>
            <person name="Nakamura Y."/>
            <person name="Robb F.T."/>
            <person name="Horikoshi K."/>
            <person name="Masuchi Y."/>
            <person name="Shizuya H."/>
            <person name="Kikuchi H."/>
        </authorList>
    </citation>
    <scope>NUCLEOTIDE SEQUENCE [LARGE SCALE GENOMIC DNA]</scope>
    <source>
        <strain>ATCC 700860 / DSM 12428 / JCM 9974 / NBRC 100139 / OT-3</strain>
    </source>
</reference>
<gene>
    <name evidence="5" type="primary">glnA</name>
    <name type="ordered locus">PH0359</name>
    <name type="ORF">PHAY031</name>
</gene>
<name>GLNA_PYRHO</name>
<protein>
    <recommendedName>
        <fullName evidence="5">Glutamine synthetase</fullName>
        <shortName evidence="5">GS</shortName>
        <ecNumber evidence="5">6.3.1.2</ecNumber>
    </recommendedName>
    <alternativeName>
        <fullName evidence="5">Glutamate--ammonia ligase</fullName>
    </alternativeName>
    <alternativeName>
        <fullName evidence="5">Glutamine synthetase I alpha</fullName>
        <shortName evidence="5">GSI alpha</shortName>
    </alternativeName>
</protein>
<feature type="chain" id="PRO_0000153210" description="Glutamine synthetase">
    <location>
        <begin position="1"/>
        <end position="443"/>
    </location>
</feature>
<feature type="domain" description="GS beta-grasp" evidence="6">
    <location>
        <begin position="16"/>
        <end position="97"/>
    </location>
</feature>
<feature type="domain" description="GS catalytic" evidence="7">
    <location>
        <begin position="103"/>
        <end position="443"/>
    </location>
</feature>
<feature type="binding site" evidence="4">
    <location>
        <position position="126"/>
    </location>
    <ligand>
        <name>Mg(2+)</name>
        <dbReference type="ChEBI" id="CHEBI:18420"/>
        <label>1</label>
    </ligand>
</feature>
<feature type="binding site" evidence="4">
    <location>
        <position position="128"/>
    </location>
    <ligand>
        <name>Mg(2+)</name>
        <dbReference type="ChEBI" id="CHEBI:18420"/>
        <label>2</label>
    </ligand>
</feature>
<feature type="binding site" evidence="4">
    <location>
        <position position="176"/>
    </location>
    <ligand>
        <name>ATP</name>
        <dbReference type="ChEBI" id="CHEBI:30616"/>
    </ligand>
</feature>
<feature type="binding site" evidence="4">
    <location>
        <position position="181"/>
    </location>
    <ligand>
        <name>Mg(2+)</name>
        <dbReference type="ChEBI" id="CHEBI:18420"/>
        <label>2</label>
    </ligand>
</feature>
<feature type="binding site" evidence="4">
    <location>
        <position position="188"/>
    </location>
    <ligand>
        <name>Mg(2+)</name>
        <dbReference type="ChEBI" id="CHEBI:18420"/>
        <label>2</label>
    </ligand>
</feature>
<feature type="binding site" evidence="2">
    <location>
        <position position="233"/>
    </location>
    <ligand>
        <name>L-glutamate</name>
        <dbReference type="ChEBI" id="CHEBI:29985"/>
    </ligand>
</feature>
<feature type="binding site" evidence="4">
    <location>
        <position position="237"/>
    </location>
    <ligand>
        <name>Mg(2+)</name>
        <dbReference type="ChEBI" id="CHEBI:18420"/>
        <label>1</label>
    </ligand>
</feature>
<feature type="binding site" evidence="4">
    <location>
        <begin position="239"/>
        <end position="241"/>
    </location>
    <ligand>
        <name>ATP</name>
        <dbReference type="ChEBI" id="CHEBI:30616"/>
    </ligand>
</feature>
<feature type="binding site" evidence="3">
    <location>
        <position position="241"/>
    </location>
    <ligand>
        <name>ATP</name>
        <dbReference type="ChEBI" id="CHEBI:30616"/>
    </ligand>
</feature>
<feature type="binding site" evidence="4">
    <location>
        <position position="287"/>
    </location>
    <ligand>
        <name>L-glutamate</name>
        <dbReference type="ChEBI" id="CHEBI:29985"/>
    </ligand>
</feature>
<feature type="binding site" evidence="1">
    <location>
        <position position="293"/>
    </location>
    <ligand>
        <name>L-glutamate</name>
        <dbReference type="ChEBI" id="CHEBI:29985"/>
    </ligand>
</feature>
<feature type="binding site" evidence="4">
    <location>
        <position position="305"/>
    </location>
    <ligand>
        <name>ATP</name>
        <dbReference type="ChEBI" id="CHEBI:30616"/>
    </ligand>
</feature>
<feature type="binding site" evidence="4">
    <location>
        <position position="305"/>
    </location>
    <ligand>
        <name>L-glutamate</name>
        <dbReference type="ChEBI" id="CHEBI:29985"/>
    </ligand>
</feature>
<feature type="binding site" evidence="4">
    <location>
        <position position="310"/>
    </location>
    <ligand>
        <name>ATP</name>
        <dbReference type="ChEBI" id="CHEBI:30616"/>
    </ligand>
</feature>
<feature type="binding site" evidence="4">
    <location>
        <position position="322"/>
    </location>
    <ligand>
        <name>Mg(2+)</name>
        <dbReference type="ChEBI" id="CHEBI:18420"/>
        <label>1</label>
    </ligand>
</feature>
<feature type="binding site" evidence="4">
    <location>
        <position position="324"/>
    </location>
    <ligand>
        <name>L-glutamate</name>
        <dbReference type="ChEBI" id="CHEBI:29985"/>
    </ligand>
</feature>